<accession>O26744</accession>
<protein>
    <recommendedName>
        <fullName evidence="3">Large ribosomal subunit protein eL37</fullName>
    </recommendedName>
    <alternativeName>
        <fullName>50S ribosomal protein L37e</fullName>
    </alternativeName>
</protein>
<feature type="chain" id="PRO_0000139733" description="Large ribosomal subunit protein eL37">
    <location>
        <begin position="1"/>
        <end position="60"/>
    </location>
</feature>
<feature type="zinc finger region" description="C4-type" evidence="2">
    <location>
        <begin position="18"/>
        <end position="36"/>
    </location>
</feature>
<feature type="binding site" evidence="1">
    <location>
        <position position="18"/>
    </location>
    <ligand>
        <name>Zn(2+)</name>
        <dbReference type="ChEBI" id="CHEBI:29105"/>
    </ligand>
</feature>
<feature type="binding site" evidence="1">
    <location>
        <position position="21"/>
    </location>
    <ligand>
        <name>Zn(2+)</name>
        <dbReference type="ChEBI" id="CHEBI:29105"/>
    </ligand>
</feature>
<feature type="binding site" evidence="1">
    <location>
        <position position="33"/>
    </location>
    <ligand>
        <name>Zn(2+)</name>
        <dbReference type="ChEBI" id="CHEBI:29105"/>
    </ligand>
</feature>
<feature type="binding site" evidence="1">
    <location>
        <position position="36"/>
    </location>
    <ligand>
        <name>Zn(2+)</name>
        <dbReference type="ChEBI" id="CHEBI:29105"/>
    </ligand>
</feature>
<proteinExistence type="inferred from homology"/>
<organism>
    <name type="scientific">Methanothermobacter thermautotrophicus (strain ATCC 29096 / DSM 1053 / JCM 10044 / NBRC 100330 / Delta H)</name>
    <name type="common">Methanobacterium thermoautotrophicum</name>
    <dbReference type="NCBI Taxonomy" id="187420"/>
    <lineage>
        <taxon>Archaea</taxon>
        <taxon>Methanobacteriati</taxon>
        <taxon>Methanobacteriota</taxon>
        <taxon>Methanomada group</taxon>
        <taxon>Methanobacteria</taxon>
        <taxon>Methanobacteriales</taxon>
        <taxon>Methanobacteriaceae</taxon>
        <taxon>Methanothermobacter</taxon>
    </lineage>
</organism>
<sequence length="60" mass="7123">MKGTPSFGKRNKNLHIRCRRCGKNSYHVRKKVCAACGFGRSRRIRRYSWQNKKITGQRLK</sequence>
<evidence type="ECO:0000250" key="1"/>
<evidence type="ECO:0000255" key="2"/>
<evidence type="ECO:0000305" key="3"/>
<dbReference type="EMBL" id="AE000666">
    <property type="protein sequence ID" value="AAB85153.1"/>
    <property type="molecule type" value="Genomic_DNA"/>
</dbReference>
<dbReference type="PIR" id="B69186">
    <property type="entry name" value="B69186"/>
</dbReference>
<dbReference type="SMR" id="O26744"/>
<dbReference type="FunCoup" id="O26744">
    <property type="interactions" value="103"/>
</dbReference>
<dbReference type="STRING" id="187420.MTH_648"/>
<dbReference type="PaxDb" id="187420-MTH_648"/>
<dbReference type="EnsemblBacteria" id="AAB85153">
    <property type="protein sequence ID" value="AAB85153"/>
    <property type="gene ID" value="MTH_648"/>
</dbReference>
<dbReference type="KEGG" id="mth:MTH_648"/>
<dbReference type="HOGENOM" id="CLU_208825_0_0_2"/>
<dbReference type="InParanoid" id="O26744"/>
<dbReference type="Proteomes" id="UP000005223">
    <property type="component" value="Chromosome"/>
</dbReference>
<dbReference type="GO" id="GO:0022625">
    <property type="term" value="C:cytosolic large ribosomal subunit"/>
    <property type="evidence" value="ECO:0007669"/>
    <property type="project" value="TreeGrafter"/>
</dbReference>
<dbReference type="GO" id="GO:0019843">
    <property type="term" value="F:rRNA binding"/>
    <property type="evidence" value="ECO:0007669"/>
    <property type="project" value="UniProtKB-KW"/>
</dbReference>
<dbReference type="GO" id="GO:0003735">
    <property type="term" value="F:structural constituent of ribosome"/>
    <property type="evidence" value="ECO:0007669"/>
    <property type="project" value="InterPro"/>
</dbReference>
<dbReference type="GO" id="GO:0008270">
    <property type="term" value="F:zinc ion binding"/>
    <property type="evidence" value="ECO:0007669"/>
    <property type="project" value="UniProtKB-UniRule"/>
</dbReference>
<dbReference type="GO" id="GO:0006412">
    <property type="term" value="P:translation"/>
    <property type="evidence" value="ECO:0007669"/>
    <property type="project" value="UniProtKB-UniRule"/>
</dbReference>
<dbReference type="FunFam" id="2.20.25.30:FF:000003">
    <property type="entry name" value="50S ribosomal protein L37e"/>
    <property type="match status" value="1"/>
</dbReference>
<dbReference type="Gene3D" id="2.20.25.30">
    <property type="match status" value="1"/>
</dbReference>
<dbReference type="HAMAP" id="MF_00547">
    <property type="entry name" value="Ribosomal_eL37"/>
    <property type="match status" value="1"/>
</dbReference>
<dbReference type="InterPro" id="IPR001569">
    <property type="entry name" value="Ribosomal_eL37"/>
</dbReference>
<dbReference type="InterPro" id="IPR011331">
    <property type="entry name" value="Ribosomal_eL37/eL43"/>
</dbReference>
<dbReference type="InterPro" id="IPR018267">
    <property type="entry name" value="Ribosomal_eL37_CS"/>
</dbReference>
<dbReference type="InterPro" id="IPR011332">
    <property type="entry name" value="Ribosomal_zn-bd"/>
</dbReference>
<dbReference type="NCBIfam" id="NF003214">
    <property type="entry name" value="PRK04179.1"/>
    <property type="match status" value="1"/>
</dbReference>
<dbReference type="PANTHER" id="PTHR10768">
    <property type="entry name" value="60S RIBOSOMAL PROTEIN L37"/>
    <property type="match status" value="1"/>
</dbReference>
<dbReference type="PANTHER" id="PTHR10768:SF0">
    <property type="entry name" value="RIBOSOMAL PROTEIN L37"/>
    <property type="match status" value="1"/>
</dbReference>
<dbReference type="Pfam" id="PF01907">
    <property type="entry name" value="Ribosomal_L37e"/>
    <property type="match status" value="1"/>
</dbReference>
<dbReference type="SUPFAM" id="SSF57829">
    <property type="entry name" value="Zn-binding ribosomal proteins"/>
    <property type="match status" value="1"/>
</dbReference>
<dbReference type="PROSITE" id="PS01077">
    <property type="entry name" value="RIBOSOMAL_L37E"/>
    <property type="match status" value="1"/>
</dbReference>
<gene>
    <name type="primary">rpl37e</name>
    <name type="ordered locus">MTH_648</name>
</gene>
<reference key="1">
    <citation type="journal article" date="1997" name="J. Bacteriol.">
        <title>Complete genome sequence of Methanobacterium thermoautotrophicum deltaH: functional analysis and comparative genomics.</title>
        <authorList>
            <person name="Smith D.R."/>
            <person name="Doucette-Stamm L.A."/>
            <person name="Deloughery C."/>
            <person name="Lee H.-M."/>
            <person name="Dubois J."/>
            <person name="Aldredge T."/>
            <person name="Bashirzadeh R."/>
            <person name="Blakely D."/>
            <person name="Cook R."/>
            <person name="Gilbert K."/>
            <person name="Harrison D."/>
            <person name="Hoang L."/>
            <person name="Keagle P."/>
            <person name="Lumm W."/>
            <person name="Pothier B."/>
            <person name="Qiu D."/>
            <person name="Spadafora R."/>
            <person name="Vicare R."/>
            <person name="Wang Y."/>
            <person name="Wierzbowski J."/>
            <person name="Gibson R."/>
            <person name="Jiwani N."/>
            <person name="Caruso A."/>
            <person name="Bush D."/>
            <person name="Safer H."/>
            <person name="Patwell D."/>
            <person name="Prabhakar S."/>
            <person name="McDougall S."/>
            <person name="Shimer G."/>
            <person name="Goyal A."/>
            <person name="Pietrovski S."/>
            <person name="Church G.M."/>
            <person name="Daniels C.J."/>
            <person name="Mao J.-I."/>
            <person name="Rice P."/>
            <person name="Noelling J."/>
            <person name="Reeve J.N."/>
        </authorList>
    </citation>
    <scope>NUCLEOTIDE SEQUENCE [LARGE SCALE GENOMIC DNA]</scope>
    <source>
        <strain>ATCC 29096 / DSM 1053 / JCM 10044 / NBRC 100330 / Delta H</strain>
    </source>
</reference>
<keyword id="KW-0479">Metal-binding</keyword>
<keyword id="KW-1185">Reference proteome</keyword>
<keyword id="KW-0687">Ribonucleoprotein</keyword>
<keyword id="KW-0689">Ribosomal protein</keyword>
<keyword id="KW-0694">RNA-binding</keyword>
<keyword id="KW-0699">rRNA-binding</keyword>
<keyword id="KW-0862">Zinc</keyword>
<keyword id="KW-0863">Zinc-finger</keyword>
<comment type="function">
    <text evidence="1">Binds to the 23S rRNA.</text>
</comment>
<comment type="cofactor">
    <cofactor evidence="1">
        <name>Zn(2+)</name>
        <dbReference type="ChEBI" id="CHEBI:29105"/>
    </cofactor>
    <text evidence="1">Binds 1 zinc ion per subunit.</text>
</comment>
<comment type="similarity">
    <text evidence="3">Belongs to the eukaryotic ribosomal protein eL37 family.</text>
</comment>
<name>RL37_METTH</name>